<sequence length="921" mass="106289">MDYKDTLNLPKTSFSMRANLVRKEPEQLKKWEEMDLYKYVQKNREGAPLFVLHDGPPYANGNIHVGTALNKILKDFIIKYKTMQGYNAPYIPGWDTHGLPIEHRVASELGEKAKELSKSTIRKKCRKYAEKYVKIQREQFKRLGVRGDWENPYLTFDPKYEASVLKVLSKLVKSGNVYRTLKPIYWCTSCETALAEAEVEYHDHKSYSIYVKFQDKNKPNRFFVIWTTTPWTLPANVAIALNPNFDYCEVKVKDEIWILAEGLLEQAMKAMGIESYEIISTKKGSEFEGEVAQHPFMNRDSVIVMADYVALDAGTGCVHTAPGHGEEDYGTGLRYRLPVISPVNDQGIFTKEAGKYAGLFVFDANPIIVEDLRKSGHLVGEGKIEHSYPHCWRCKNPVIFRATEQWFIDVDKNDLRQKALSEIEKTEWHPSWGQNRITAMVQDRPDWCISRQRSWGIPIPAFRCQDCGESILDGKVIDHFAGIVEEKGTDVWFEWSESDLLPEGYTCPKCGSKNLKKQEDILDVWVDSGSSFEAVVKVMDELRFPADVYIEGSDQHRGWFQSSLLLSVGTEGVAPFKSVITHGFINDEQGRKMSKSLGNAVDPQEINNKYGAEILRLWVASSNYQEDIRISMNIIQQQIENYKKIRNTLRYLLGNLSDYSPQDSVPYEELLELDKWAIMKLHKLIRDVTRYYDRYEFYKVFQSILKFIITDMSAFYLDIIKDRLYVEGKTSPERRSAQTVLFEILVALNKMLAPILTFTSEEVYAHLPEAARNYKTIQVENWPEYKEEYIDSSLEERWEKLINLREDVLKALEIARAEKLIGNSLDAKVTLQIRSKDIDEIVRQYSREFIADLFIVSQVEFAESVEGFNGEYAVVKVDRAEGEKCQRCWKYSIETGADPELPDMCPRCVAVLRKYGSDYEL</sequence>
<dbReference type="EC" id="6.1.1.5" evidence="1"/>
<dbReference type="EMBL" id="CP001634">
    <property type="protein sequence ID" value="ACR78740.1"/>
    <property type="molecule type" value="Genomic_DNA"/>
</dbReference>
<dbReference type="RefSeq" id="WP_012744528.1">
    <property type="nucleotide sequence ID" value="NC_012785.1"/>
</dbReference>
<dbReference type="SMR" id="C5CHA1"/>
<dbReference type="STRING" id="521045.Kole_0011"/>
<dbReference type="KEGG" id="kol:Kole_0011"/>
<dbReference type="eggNOG" id="COG0060">
    <property type="taxonomic scope" value="Bacteria"/>
</dbReference>
<dbReference type="HOGENOM" id="CLU_001493_7_0_0"/>
<dbReference type="OrthoDB" id="9810365at2"/>
<dbReference type="Proteomes" id="UP000002382">
    <property type="component" value="Chromosome"/>
</dbReference>
<dbReference type="GO" id="GO:0005829">
    <property type="term" value="C:cytosol"/>
    <property type="evidence" value="ECO:0007669"/>
    <property type="project" value="TreeGrafter"/>
</dbReference>
<dbReference type="GO" id="GO:0002161">
    <property type="term" value="F:aminoacyl-tRNA deacylase activity"/>
    <property type="evidence" value="ECO:0007669"/>
    <property type="project" value="InterPro"/>
</dbReference>
<dbReference type="GO" id="GO:0005524">
    <property type="term" value="F:ATP binding"/>
    <property type="evidence" value="ECO:0007669"/>
    <property type="project" value="UniProtKB-UniRule"/>
</dbReference>
<dbReference type="GO" id="GO:0004822">
    <property type="term" value="F:isoleucine-tRNA ligase activity"/>
    <property type="evidence" value="ECO:0007669"/>
    <property type="project" value="UniProtKB-UniRule"/>
</dbReference>
<dbReference type="GO" id="GO:0000049">
    <property type="term" value="F:tRNA binding"/>
    <property type="evidence" value="ECO:0007669"/>
    <property type="project" value="InterPro"/>
</dbReference>
<dbReference type="GO" id="GO:0008270">
    <property type="term" value="F:zinc ion binding"/>
    <property type="evidence" value="ECO:0007669"/>
    <property type="project" value="UniProtKB-UniRule"/>
</dbReference>
<dbReference type="GO" id="GO:0006428">
    <property type="term" value="P:isoleucyl-tRNA aminoacylation"/>
    <property type="evidence" value="ECO:0007669"/>
    <property type="project" value="UniProtKB-UniRule"/>
</dbReference>
<dbReference type="CDD" id="cd07960">
    <property type="entry name" value="Anticodon_Ia_Ile_BEm"/>
    <property type="match status" value="1"/>
</dbReference>
<dbReference type="CDD" id="cd00818">
    <property type="entry name" value="IleRS_core"/>
    <property type="match status" value="1"/>
</dbReference>
<dbReference type="FunFam" id="1.10.730.20:FF:000001">
    <property type="entry name" value="Isoleucine--tRNA ligase"/>
    <property type="match status" value="1"/>
</dbReference>
<dbReference type="FunFam" id="3.40.50.620:FF:000152">
    <property type="entry name" value="Isoleucine--tRNA ligase"/>
    <property type="match status" value="1"/>
</dbReference>
<dbReference type="Gene3D" id="1.10.730.20">
    <property type="match status" value="1"/>
</dbReference>
<dbReference type="Gene3D" id="3.40.50.620">
    <property type="entry name" value="HUPs"/>
    <property type="match status" value="2"/>
</dbReference>
<dbReference type="Gene3D" id="1.10.10.830">
    <property type="entry name" value="Ile-tRNA synthetase CP2 domain-like"/>
    <property type="match status" value="1"/>
</dbReference>
<dbReference type="HAMAP" id="MF_02002">
    <property type="entry name" value="Ile_tRNA_synth_type1"/>
    <property type="match status" value="1"/>
</dbReference>
<dbReference type="InterPro" id="IPR001412">
    <property type="entry name" value="aa-tRNA-synth_I_CS"/>
</dbReference>
<dbReference type="InterPro" id="IPR002300">
    <property type="entry name" value="aa-tRNA-synth_Ia"/>
</dbReference>
<dbReference type="InterPro" id="IPR033708">
    <property type="entry name" value="Anticodon_Ile_BEm"/>
</dbReference>
<dbReference type="InterPro" id="IPR002301">
    <property type="entry name" value="Ile-tRNA-ligase"/>
</dbReference>
<dbReference type="InterPro" id="IPR023585">
    <property type="entry name" value="Ile-tRNA-ligase_type1"/>
</dbReference>
<dbReference type="InterPro" id="IPR050081">
    <property type="entry name" value="Ile-tRNA_ligase"/>
</dbReference>
<dbReference type="InterPro" id="IPR013155">
    <property type="entry name" value="M/V/L/I-tRNA-synth_anticd-bd"/>
</dbReference>
<dbReference type="InterPro" id="IPR014729">
    <property type="entry name" value="Rossmann-like_a/b/a_fold"/>
</dbReference>
<dbReference type="InterPro" id="IPR009080">
    <property type="entry name" value="tRNAsynth_Ia_anticodon-bd"/>
</dbReference>
<dbReference type="InterPro" id="IPR009008">
    <property type="entry name" value="Val/Leu/Ile-tRNA-synth_edit"/>
</dbReference>
<dbReference type="InterPro" id="IPR010663">
    <property type="entry name" value="Znf_FPG/IleRS"/>
</dbReference>
<dbReference type="NCBIfam" id="TIGR00392">
    <property type="entry name" value="ileS"/>
    <property type="match status" value="1"/>
</dbReference>
<dbReference type="PANTHER" id="PTHR42765:SF1">
    <property type="entry name" value="ISOLEUCINE--TRNA LIGASE, MITOCHONDRIAL"/>
    <property type="match status" value="1"/>
</dbReference>
<dbReference type="PANTHER" id="PTHR42765">
    <property type="entry name" value="SOLEUCYL-TRNA SYNTHETASE"/>
    <property type="match status" value="1"/>
</dbReference>
<dbReference type="Pfam" id="PF08264">
    <property type="entry name" value="Anticodon_1"/>
    <property type="match status" value="1"/>
</dbReference>
<dbReference type="Pfam" id="PF00133">
    <property type="entry name" value="tRNA-synt_1"/>
    <property type="match status" value="1"/>
</dbReference>
<dbReference type="Pfam" id="PF06827">
    <property type="entry name" value="zf-FPG_IleRS"/>
    <property type="match status" value="1"/>
</dbReference>
<dbReference type="PRINTS" id="PR00984">
    <property type="entry name" value="TRNASYNTHILE"/>
</dbReference>
<dbReference type="SUPFAM" id="SSF47323">
    <property type="entry name" value="Anticodon-binding domain of a subclass of class I aminoacyl-tRNA synthetases"/>
    <property type="match status" value="1"/>
</dbReference>
<dbReference type="SUPFAM" id="SSF52374">
    <property type="entry name" value="Nucleotidylyl transferase"/>
    <property type="match status" value="1"/>
</dbReference>
<dbReference type="SUPFAM" id="SSF50677">
    <property type="entry name" value="ValRS/IleRS/LeuRS editing domain"/>
    <property type="match status" value="1"/>
</dbReference>
<dbReference type="PROSITE" id="PS00178">
    <property type="entry name" value="AA_TRNA_LIGASE_I"/>
    <property type="match status" value="1"/>
</dbReference>
<accession>C5CHA1</accession>
<comment type="function">
    <text evidence="1">Catalyzes the attachment of isoleucine to tRNA(Ile). As IleRS can inadvertently accommodate and process structurally similar amino acids such as valine, to avoid such errors it has two additional distinct tRNA(Ile)-dependent editing activities. One activity is designated as 'pretransfer' editing and involves the hydrolysis of activated Val-AMP. The other activity is designated 'posttransfer' editing and involves deacylation of mischarged Val-tRNA(Ile).</text>
</comment>
<comment type="catalytic activity">
    <reaction evidence="1">
        <text>tRNA(Ile) + L-isoleucine + ATP = L-isoleucyl-tRNA(Ile) + AMP + diphosphate</text>
        <dbReference type="Rhea" id="RHEA:11060"/>
        <dbReference type="Rhea" id="RHEA-COMP:9666"/>
        <dbReference type="Rhea" id="RHEA-COMP:9695"/>
        <dbReference type="ChEBI" id="CHEBI:30616"/>
        <dbReference type="ChEBI" id="CHEBI:33019"/>
        <dbReference type="ChEBI" id="CHEBI:58045"/>
        <dbReference type="ChEBI" id="CHEBI:78442"/>
        <dbReference type="ChEBI" id="CHEBI:78528"/>
        <dbReference type="ChEBI" id="CHEBI:456215"/>
        <dbReference type="EC" id="6.1.1.5"/>
    </reaction>
</comment>
<comment type="cofactor">
    <cofactor evidence="1">
        <name>Zn(2+)</name>
        <dbReference type="ChEBI" id="CHEBI:29105"/>
    </cofactor>
    <text evidence="1">Binds 1 zinc ion per subunit.</text>
</comment>
<comment type="subunit">
    <text evidence="1">Monomer.</text>
</comment>
<comment type="subcellular location">
    <subcellularLocation>
        <location evidence="1">Cytoplasm</location>
    </subcellularLocation>
</comment>
<comment type="domain">
    <text evidence="1">IleRS has two distinct active sites: one for aminoacylation and one for editing. The misactivated valine is translocated from the active site to the editing site, which sterically excludes the correctly activated isoleucine. The single editing site contains two valyl binding pockets, one specific for each substrate (Val-AMP or Val-tRNA(Ile)).</text>
</comment>
<comment type="similarity">
    <text evidence="1">Belongs to the class-I aminoacyl-tRNA synthetase family. IleS type 1 subfamily.</text>
</comment>
<protein>
    <recommendedName>
        <fullName evidence="1">Isoleucine--tRNA ligase</fullName>
        <ecNumber evidence="1">6.1.1.5</ecNumber>
    </recommendedName>
    <alternativeName>
        <fullName evidence="1">Isoleucyl-tRNA synthetase</fullName>
        <shortName evidence="1">IleRS</shortName>
    </alternativeName>
</protein>
<name>SYI_KOSOT</name>
<keyword id="KW-0030">Aminoacyl-tRNA synthetase</keyword>
<keyword id="KW-0067">ATP-binding</keyword>
<keyword id="KW-0963">Cytoplasm</keyword>
<keyword id="KW-0436">Ligase</keyword>
<keyword id="KW-0479">Metal-binding</keyword>
<keyword id="KW-0547">Nucleotide-binding</keyword>
<keyword id="KW-0648">Protein biosynthesis</keyword>
<keyword id="KW-1185">Reference proteome</keyword>
<keyword id="KW-0862">Zinc</keyword>
<organism>
    <name type="scientific">Kosmotoga olearia (strain ATCC BAA-1733 / DSM 21960 / TBF 19.5.1)</name>
    <dbReference type="NCBI Taxonomy" id="521045"/>
    <lineage>
        <taxon>Bacteria</taxon>
        <taxon>Thermotogati</taxon>
        <taxon>Thermotogota</taxon>
        <taxon>Thermotogae</taxon>
        <taxon>Kosmotogales</taxon>
        <taxon>Kosmotogaceae</taxon>
        <taxon>Kosmotoga</taxon>
    </lineage>
</organism>
<feature type="chain" id="PRO_1000216238" description="Isoleucine--tRNA ligase">
    <location>
        <begin position="1"/>
        <end position="921"/>
    </location>
</feature>
<feature type="short sequence motif" description="'HIGH' region">
    <location>
        <begin position="57"/>
        <end position="67"/>
    </location>
</feature>
<feature type="short sequence motif" description="'KMSKS' region">
    <location>
        <begin position="592"/>
        <end position="596"/>
    </location>
</feature>
<feature type="binding site" evidence="1">
    <location>
        <position position="551"/>
    </location>
    <ligand>
        <name>L-isoleucyl-5'-AMP</name>
        <dbReference type="ChEBI" id="CHEBI:178002"/>
    </ligand>
</feature>
<feature type="binding site" evidence="1">
    <location>
        <position position="595"/>
    </location>
    <ligand>
        <name>ATP</name>
        <dbReference type="ChEBI" id="CHEBI:30616"/>
    </ligand>
</feature>
<feature type="binding site" evidence="1">
    <location>
        <position position="885"/>
    </location>
    <ligand>
        <name>Zn(2+)</name>
        <dbReference type="ChEBI" id="CHEBI:29105"/>
    </ligand>
</feature>
<feature type="binding site" evidence="1">
    <location>
        <position position="888"/>
    </location>
    <ligand>
        <name>Zn(2+)</name>
        <dbReference type="ChEBI" id="CHEBI:29105"/>
    </ligand>
</feature>
<feature type="binding site" evidence="1">
    <location>
        <position position="905"/>
    </location>
    <ligand>
        <name>Zn(2+)</name>
        <dbReference type="ChEBI" id="CHEBI:29105"/>
    </ligand>
</feature>
<feature type="binding site" evidence="1">
    <location>
        <position position="908"/>
    </location>
    <ligand>
        <name>Zn(2+)</name>
        <dbReference type="ChEBI" id="CHEBI:29105"/>
    </ligand>
</feature>
<proteinExistence type="inferred from homology"/>
<gene>
    <name evidence="1" type="primary">ileS</name>
    <name type="ordered locus">Kole_0011</name>
</gene>
<evidence type="ECO:0000255" key="1">
    <source>
        <dbReference type="HAMAP-Rule" id="MF_02002"/>
    </source>
</evidence>
<reference key="1">
    <citation type="submission" date="2009-06" db="EMBL/GenBank/DDBJ databases">
        <title>Complete sequence of Thermotogales bacterium TBF 19.5.1.</title>
        <authorList>
            <consortium name="US DOE Joint Genome Institute"/>
            <person name="Lucas S."/>
            <person name="Copeland A."/>
            <person name="Lapidus A."/>
            <person name="Glavina del Rio T."/>
            <person name="Tice H."/>
            <person name="Bruce D."/>
            <person name="Goodwin L."/>
            <person name="Pitluck S."/>
            <person name="Chertkov O."/>
            <person name="Brettin T."/>
            <person name="Detter J.C."/>
            <person name="Han C."/>
            <person name="Schmutz J."/>
            <person name="Larimer F."/>
            <person name="Land M."/>
            <person name="Hauser L."/>
            <person name="Kyrpides N."/>
            <person name="Ovchinnikova G."/>
            <person name="Noll K."/>
        </authorList>
    </citation>
    <scope>NUCLEOTIDE SEQUENCE [LARGE SCALE GENOMIC DNA]</scope>
    <source>
        <strain>ATCC BAA-1733 / DSM 21960 / TBF 19.5.1</strain>
    </source>
</reference>